<proteinExistence type="predicted"/>
<sequence length="274" mass="31881">MNEKHQIMQTEKNDGQNITELDFSGYPIEKEIKGFIHYFLILVNKNLSLSREIEMVKKNSLSDLESMKSFYNTNFGKGNSDLMSKVVVYFSNKIAQRSNNVISGYVDLEKEAKELLEKLNKLGIEASVGKTETLDSKKKLEILKNKKEYLQNEVKKSKGFFRSVFLFFFGDNKKNEFSEKICSIEKEMEKINENMKESEMEIFIQKTQNLMNCLTYATHYILDIKSNFHIMKLINHELLNNDFSLCCQDKELMNGIYSKTKDLLTNSNLKSLGQ</sequence>
<evidence type="ECO:0000255" key="1"/>
<reference key="1">
    <citation type="journal article" date="2005" name="Nature">
        <title>The genome of the social amoeba Dictyostelium discoideum.</title>
        <authorList>
            <person name="Eichinger L."/>
            <person name="Pachebat J.A."/>
            <person name="Gloeckner G."/>
            <person name="Rajandream M.A."/>
            <person name="Sucgang R."/>
            <person name="Berriman M."/>
            <person name="Song J."/>
            <person name="Olsen R."/>
            <person name="Szafranski K."/>
            <person name="Xu Q."/>
            <person name="Tunggal B."/>
            <person name="Kummerfeld S."/>
            <person name="Madera M."/>
            <person name="Konfortov B.A."/>
            <person name="Rivero F."/>
            <person name="Bankier A.T."/>
            <person name="Lehmann R."/>
            <person name="Hamlin N."/>
            <person name="Davies R."/>
            <person name="Gaudet P."/>
            <person name="Fey P."/>
            <person name="Pilcher K."/>
            <person name="Chen G."/>
            <person name="Saunders D."/>
            <person name="Sodergren E.J."/>
            <person name="Davis P."/>
            <person name="Kerhornou A."/>
            <person name="Nie X."/>
            <person name="Hall N."/>
            <person name="Anjard C."/>
            <person name="Hemphill L."/>
            <person name="Bason N."/>
            <person name="Farbrother P."/>
            <person name="Desany B."/>
            <person name="Just E."/>
            <person name="Morio T."/>
            <person name="Rost R."/>
            <person name="Churcher C.M."/>
            <person name="Cooper J."/>
            <person name="Haydock S."/>
            <person name="van Driessche N."/>
            <person name="Cronin A."/>
            <person name="Goodhead I."/>
            <person name="Muzny D.M."/>
            <person name="Mourier T."/>
            <person name="Pain A."/>
            <person name="Lu M."/>
            <person name="Harper D."/>
            <person name="Lindsay R."/>
            <person name="Hauser H."/>
            <person name="James K.D."/>
            <person name="Quiles M."/>
            <person name="Madan Babu M."/>
            <person name="Saito T."/>
            <person name="Buchrieser C."/>
            <person name="Wardroper A."/>
            <person name="Felder M."/>
            <person name="Thangavelu M."/>
            <person name="Johnson D."/>
            <person name="Knights A."/>
            <person name="Loulseged H."/>
            <person name="Mungall K.L."/>
            <person name="Oliver K."/>
            <person name="Price C."/>
            <person name="Quail M.A."/>
            <person name="Urushihara H."/>
            <person name="Hernandez J."/>
            <person name="Rabbinowitsch E."/>
            <person name="Steffen D."/>
            <person name="Sanders M."/>
            <person name="Ma J."/>
            <person name="Kohara Y."/>
            <person name="Sharp S."/>
            <person name="Simmonds M.N."/>
            <person name="Spiegler S."/>
            <person name="Tivey A."/>
            <person name="Sugano S."/>
            <person name="White B."/>
            <person name="Walker D."/>
            <person name="Woodward J.R."/>
            <person name="Winckler T."/>
            <person name="Tanaka Y."/>
            <person name="Shaulsky G."/>
            <person name="Schleicher M."/>
            <person name="Weinstock G.M."/>
            <person name="Rosenthal A."/>
            <person name="Cox E.C."/>
            <person name="Chisholm R.L."/>
            <person name="Gibbs R.A."/>
            <person name="Loomis W.F."/>
            <person name="Platzer M."/>
            <person name="Kay R.R."/>
            <person name="Williams J.G."/>
            <person name="Dear P.H."/>
            <person name="Noegel A.A."/>
            <person name="Barrell B.G."/>
            <person name="Kuspa A."/>
        </authorList>
    </citation>
    <scope>NUCLEOTIDE SEQUENCE [LARGE SCALE GENOMIC DNA]</scope>
    <source>
        <strain>AX4</strain>
    </source>
</reference>
<feature type="chain" id="PRO_0000348089" description="Uncharacterized protein DDB_G0268318">
    <location>
        <begin position="1"/>
        <end position="274"/>
    </location>
</feature>
<feature type="coiled-coil region" evidence="1">
    <location>
        <begin position="99"/>
        <end position="206"/>
    </location>
</feature>
<keyword id="KW-0175">Coiled coil</keyword>
<keyword id="KW-1185">Reference proteome</keyword>
<protein>
    <recommendedName>
        <fullName>Uncharacterized protein DDB_G0268318</fullName>
    </recommendedName>
</protein>
<name>Y2120_DICDI</name>
<gene>
    <name type="ORF">DDB_G0268318</name>
</gene>
<accession>Q55GE7</accession>
<dbReference type="EMBL" id="AAFI02000003">
    <property type="protein sequence ID" value="EAL73612.1"/>
    <property type="molecule type" value="Genomic_DNA"/>
</dbReference>
<dbReference type="RefSeq" id="XP_647237.1">
    <property type="nucleotide sequence ID" value="XM_642145.1"/>
</dbReference>
<dbReference type="SMR" id="Q55GE7"/>
<dbReference type="PaxDb" id="44689-DDB0202120"/>
<dbReference type="EnsemblProtists" id="EAL73612">
    <property type="protein sequence ID" value="EAL73612"/>
    <property type="gene ID" value="DDB_G0268318"/>
</dbReference>
<dbReference type="GeneID" id="8616042"/>
<dbReference type="KEGG" id="ddi:DDB_G0268318"/>
<dbReference type="dictyBase" id="DDB_G0268318"/>
<dbReference type="VEuPathDB" id="AmoebaDB:DDB_G0268318"/>
<dbReference type="HOGENOM" id="CLU_1017163_0_0_1"/>
<dbReference type="InParanoid" id="Q55GE7"/>
<dbReference type="PRO" id="PR:Q55GE7"/>
<dbReference type="Proteomes" id="UP000002195">
    <property type="component" value="Chromosome 1"/>
</dbReference>
<organism>
    <name type="scientific">Dictyostelium discoideum</name>
    <name type="common">Social amoeba</name>
    <dbReference type="NCBI Taxonomy" id="44689"/>
    <lineage>
        <taxon>Eukaryota</taxon>
        <taxon>Amoebozoa</taxon>
        <taxon>Evosea</taxon>
        <taxon>Eumycetozoa</taxon>
        <taxon>Dictyostelia</taxon>
        <taxon>Dictyosteliales</taxon>
        <taxon>Dictyosteliaceae</taxon>
        <taxon>Dictyostelium</taxon>
    </lineage>
</organism>